<sequence>MARNGPPGRGRSSLPFCLSRGVNCGQSRGMTQPDYQLEAALAAQGHIRIAGVDEVGRGPLAGPVVAAAVVLDPGAIPEGLNDSKKLTAARRERLYDILHANAQVSIAEASVEEIDALNILRASHLAMERAVAALNPAPDFLLIDGNLIPAGLSCPAEAVIKGDGRSVSIAAASIVAKTWRDRLMVDLAQQHPGYGWERNAGYPTKEHRSALQNLGVTPHHRRSFKTVHKILYQE</sequence>
<comment type="function">
    <text evidence="1">Endonuclease that specifically degrades the RNA of RNA-DNA hybrids.</text>
</comment>
<comment type="catalytic activity">
    <reaction evidence="1">
        <text>Endonucleolytic cleavage to 5'-phosphomonoester.</text>
        <dbReference type="EC" id="3.1.26.4"/>
    </reaction>
</comment>
<comment type="cofactor">
    <cofactor evidence="1">
        <name>Mn(2+)</name>
        <dbReference type="ChEBI" id="CHEBI:29035"/>
    </cofactor>
    <cofactor evidence="1">
        <name>Mg(2+)</name>
        <dbReference type="ChEBI" id="CHEBI:18420"/>
    </cofactor>
    <text evidence="1">Manganese or magnesium. Binds 1 divalent metal ion per monomer in the absence of substrate. May bind a second metal ion after substrate binding.</text>
</comment>
<comment type="subcellular location">
    <subcellularLocation>
        <location evidence="1">Cytoplasm</location>
    </subcellularLocation>
</comment>
<comment type="similarity">
    <text evidence="1">Belongs to the RNase HII family.</text>
</comment>
<evidence type="ECO:0000255" key="1">
    <source>
        <dbReference type="HAMAP-Rule" id="MF_00052"/>
    </source>
</evidence>
<evidence type="ECO:0000255" key="2">
    <source>
        <dbReference type="PROSITE-ProRule" id="PRU01319"/>
    </source>
</evidence>
<gene>
    <name evidence="1" type="primary">rnhB</name>
    <name type="ordered locus">SPO3452</name>
</gene>
<organism>
    <name type="scientific">Ruegeria pomeroyi (strain ATCC 700808 / DSM 15171 / DSS-3)</name>
    <name type="common">Silicibacter pomeroyi</name>
    <dbReference type="NCBI Taxonomy" id="246200"/>
    <lineage>
        <taxon>Bacteria</taxon>
        <taxon>Pseudomonadati</taxon>
        <taxon>Pseudomonadota</taxon>
        <taxon>Alphaproteobacteria</taxon>
        <taxon>Rhodobacterales</taxon>
        <taxon>Roseobacteraceae</taxon>
        <taxon>Ruegeria</taxon>
    </lineage>
</organism>
<dbReference type="EC" id="3.1.26.4" evidence="1"/>
<dbReference type="EMBL" id="CP000031">
    <property type="protein sequence ID" value="AAV96678.1"/>
    <property type="molecule type" value="Genomic_DNA"/>
</dbReference>
<dbReference type="SMR" id="Q5LMW0"/>
<dbReference type="STRING" id="246200.SPO3452"/>
<dbReference type="PaxDb" id="246200-SPO3452"/>
<dbReference type="KEGG" id="sil:SPO3452"/>
<dbReference type="eggNOG" id="COG0164">
    <property type="taxonomic scope" value="Bacteria"/>
</dbReference>
<dbReference type="HOGENOM" id="CLU_036532_3_2_5"/>
<dbReference type="Proteomes" id="UP000001023">
    <property type="component" value="Chromosome"/>
</dbReference>
<dbReference type="GO" id="GO:0005737">
    <property type="term" value="C:cytoplasm"/>
    <property type="evidence" value="ECO:0007669"/>
    <property type="project" value="UniProtKB-SubCell"/>
</dbReference>
<dbReference type="GO" id="GO:0032299">
    <property type="term" value="C:ribonuclease H2 complex"/>
    <property type="evidence" value="ECO:0007669"/>
    <property type="project" value="TreeGrafter"/>
</dbReference>
<dbReference type="GO" id="GO:0030145">
    <property type="term" value="F:manganese ion binding"/>
    <property type="evidence" value="ECO:0007669"/>
    <property type="project" value="UniProtKB-UniRule"/>
</dbReference>
<dbReference type="GO" id="GO:0003723">
    <property type="term" value="F:RNA binding"/>
    <property type="evidence" value="ECO:0007669"/>
    <property type="project" value="InterPro"/>
</dbReference>
<dbReference type="GO" id="GO:0004523">
    <property type="term" value="F:RNA-DNA hybrid ribonuclease activity"/>
    <property type="evidence" value="ECO:0007669"/>
    <property type="project" value="UniProtKB-UniRule"/>
</dbReference>
<dbReference type="GO" id="GO:0043137">
    <property type="term" value="P:DNA replication, removal of RNA primer"/>
    <property type="evidence" value="ECO:0007669"/>
    <property type="project" value="TreeGrafter"/>
</dbReference>
<dbReference type="GO" id="GO:0006298">
    <property type="term" value="P:mismatch repair"/>
    <property type="evidence" value="ECO:0007669"/>
    <property type="project" value="TreeGrafter"/>
</dbReference>
<dbReference type="CDD" id="cd07182">
    <property type="entry name" value="RNase_HII_bacteria_HII_like"/>
    <property type="match status" value="1"/>
</dbReference>
<dbReference type="FunFam" id="3.30.420.10:FF:000006">
    <property type="entry name" value="Ribonuclease HII"/>
    <property type="match status" value="1"/>
</dbReference>
<dbReference type="Gene3D" id="3.30.420.10">
    <property type="entry name" value="Ribonuclease H-like superfamily/Ribonuclease H"/>
    <property type="match status" value="1"/>
</dbReference>
<dbReference type="HAMAP" id="MF_00052_B">
    <property type="entry name" value="RNase_HII_B"/>
    <property type="match status" value="1"/>
</dbReference>
<dbReference type="InterPro" id="IPR022898">
    <property type="entry name" value="RNase_HII"/>
</dbReference>
<dbReference type="InterPro" id="IPR001352">
    <property type="entry name" value="RNase_HII/HIII"/>
</dbReference>
<dbReference type="InterPro" id="IPR024567">
    <property type="entry name" value="RNase_HII/HIII_dom"/>
</dbReference>
<dbReference type="InterPro" id="IPR012337">
    <property type="entry name" value="RNaseH-like_sf"/>
</dbReference>
<dbReference type="InterPro" id="IPR036397">
    <property type="entry name" value="RNaseH_sf"/>
</dbReference>
<dbReference type="NCBIfam" id="NF000594">
    <property type="entry name" value="PRK00015.1-1"/>
    <property type="match status" value="1"/>
</dbReference>
<dbReference type="NCBIfam" id="NF000595">
    <property type="entry name" value="PRK00015.1-3"/>
    <property type="match status" value="1"/>
</dbReference>
<dbReference type="PANTHER" id="PTHR10954">
    <property type="entry name" value="RIBONUCLEASE H2 SUBUNIT A"/>
    <property type="match status" value="1"/>
</dbReference>
<dbReference type="PANTHER" id="PTHR10954:SF18">
    <property type="entry name" value="RIBONUCLEASE HII"/>
    <property type="match status" value="1"/>
</dbReference>
<dbReference type="Pfam" id="PF01351">
    <property type="entry name" value="RNase_HII"/>
    <property type="match status" value="1"/>
</dbReference>
<dbReference type="SUPFAM" id="SSF53098">
    <property type="entry name" value="Ribonuclease H-like"/>
    <property type="match status" value="1"/>
</dbReference>
<dbReference type="PROSITE" id="PS51975">
    <property type="entry name" value="RNASE_H_2"/>
    <property type="match status" value="1"/>
</dbReference>
<feature type="chain" id="PRO_0000235766" description="Ribonuclease HII">
    <location>
        <begin position="1"/>
        <end position="234"/>
    </location>
</feature>
<feature type="domain" description="RNase H type-2" evidence="2">
    <location>
        <begin position="47"/>
        <end position="234"/>
    </location>
</feature>
<feature type="binding site" evidence="1">
    <location>
        <position position="53"/>
    </location>
    <ligand>
        <name>a divalent metal cation</name>
        <dbReference type="ChEBI" id="CHEBI:60240"/>
    </ligand>
</feature>
<feature type="binding site" evidence="1">
    <location>
        <position position="54"/>
    </location>
    <ligand>
        <name>a divalent metal cation</name>
        <dbReference type="ChEBI" id="CHEBI:60240"/>
    </ligand>
</feature>
<feature type="binding site" evidence="1">
    <location>
        <position position="144"/>
    </location>
    <ligand>
        <name>a divalent metal cation</name>
        <dbReference type="ChEBI" id="CHEBI:60240"/>
    </ligand>
</feature>
<reference key="1">
    <citation type="journal article" date="2004" name="Nature">
        <title>Genome sequence of Silicibacter pomeroyi reveals adaptations to the marine environment.</title>
        <authorList>
            <person name="Moran M.A."/>
            <person name="Buchan A."/>
            <person name="Gonzalez J.M."/>
            <person name="Heidelberg J.F."/>
            <person name="Whitman W.B."/>
            <person name="Kiene R.P."/>
            <person name="Henriksen J.R."/>
            <person name="King G.M."/>
            <person name="Belas R."/>
            <person name="Fuqua C."/>
            <person name="Brinkac L.M."/>
            <person name="Lewis M."/>
            <person name="Johri S."/>
            <person name="Weaver B."/>
            <person name="Pai G."/>
            <person name="Eisen J.A."/>
            <person name="Rahe E."/>
            <person name="Sheldon W.M."/>
            <person name="Ye W."/>
            <person name="Miller T.R."/>
            <person name="Carlton J."/>
            <person name="Rasko D.A."/>
            <person name="Paulsen I.T."/>
            <person name="Ren Q."/>
            <person name="Daugherty S.C."/>
            <person name="DeBoy R.T."/>
            <person name="Dodson R.J."/>
            <person name="Durkin A.S."/>
            <person name="Madupu R."/>
            <person name="Nelson W.C."/>
            <person name="Sullivan S.A."/>
            <person name="Rosovitz M.J."/>
            <person name="Haft D.H."/>
            <person name="Selengut J."/>
            <person name="Ward N."/>
        </authorList>
    </citation>
    <scope>NUCLEOTIDE SEQUENCE [LARGE SCALE GENOMIC DNA]</scope>
    <source>
        <strain>ATCC 700808 / DSM 15171 / DSS-3</strain>
    </source>
</reference>
<reference key="2">
    <citation type="journal article" date="2014" name="Stand. Genomic Sci.">
        <title>An updated genome annotation for the model marine bacterium Ruegeria pomeroyi DSS-3.</title>
        <authorList>
            <person name="Rivers A.R."/>
            <person name="Smith C.B."/>
            <person name="Moran M.A."/>
        </authorList>
    </citation>
    <scope>GENOME REANNOTATION</scope>
    <source>
        <strain>ATCC 700808 / DSM 15171 / DSS-3</strain>
    </source>
</reference>
<protein>
    <recommendedName>
        <fullName evidence="1">Ribonuclease HII</fullName>
        <shortName evidence="1">RNase HII</shortName>
        <ecNumber evidence="1">3.1.26.4</ecNumber>
    </recommendedName>
</protein>
<keyword id="KW-0963">Cytoplasm</keyword>
<keyword id="KW-0255">Endonuclease</keyword>
<keyword id="KW-0378">Hydrolase</keyword>
<keyword id="KW-0464">Manganese</keyword>
<keyword id="KW-0479">Metal-binding</keyword>
<keyword id="KW-0540">Nuclease</keyword>
<keyword id="KW-1185">Reference proteome</keyword>
<proteinExistence type="inferred from homology"/>
<accession>Q5LMW0</accession>
<name>RNH2_RUEPO</name>